<keyword id="KW-0002">3D-structure</keyword>
<keyword id="KW-0963">Cytoplasm</keyword>
<keyword id="KW-0396">Initiation factor</keyword>
<keyword id="KW-0597">Phosphoprotein</keyword>
<keyword id="KW-0648">Protein biosynthesis</keyword>
<keyword id="KW-1185">Reference proteome</keyword>
<keyword id="KW-0677">Repeat</keyword>
<keyword id="KW-0853">WD repeat</keyword>
<sequence length="347" mass="38755">MKAIKLTGHERPLTQVKYNKEGDLLFSCSKDSSASVWYSLNGERLGTLDGHTGTIWSIDVDCFTKYCVTGSADYSIKLWDVSNGQCVATWKSPVPVKRVEFSPCGNYFLAILDNVMKNPGSINIYEIERDSATHELTKVSEEPIHKIITHEGLDAATVAGWSTKGKYIIAGHKDGKISKYDVSNNYEYVDSIDLHEKSISDMQFSPDLTYFITSSRDTNSFLVDVSTLQVLKKYETDCPLNTAVITPLKEFIILGGGQEAKDVTTTSANEGKFEARFYHKIFEEEIGRVQGHFGPLNTVAISPQGTSYASGGEDGFIRLHHFEKSYFDFKYDVEKAAEAKEHMQEAN</sequence>
<reference key="1">
    <citation type="journal article" date="1997" name="Mol. Cell. Biol.">
        <title>The 39-kilodalton subunit of eukaryotic translation initiation factor 3 is essential for the complex's integrity and for cell viability in Saccharomyces cerevisiae.</title>
        <authorList>
            <person name="Naranda T."/>
            <person name="Kainuma M."/>
            <person name="Macmillan S.E."/>
            <person name="Hershey J.W.B."/>
        </authorList>
    </citation>
    <scope>NUCLEOTIDE SEQUENCE [GENOMIC DNA]</scope>
    <source>
        <strain>W303D</strain>
    </source>
</reference>
<reference key="2">
    <citation type="journal article" date="1997" name="Nature">
        <title>The nucleotide sequence of Saccharomyces cerevisiae chromosome XIII.</title>
        <authorList>
            <person name="Bowman S."/>
            <person name="Churcher C.M."/>
            <person name="Badcock K."/>
            <person name="Brown D."/>
            <person name="Chillingworth T."/>
            <person name="Connor R."/>
            <person name="Dedman K."/>
            <person name="Devlin K."/>
            <person name="Gentles S."/>
            <person name="Hamlin N."/>
            <person name="Hunt S."/>
            <person name="Jagels K."/>
            <person name="Lye G."/>
            <person name="Moule S."/>
            <person name="Odell C."/>
            <person name="Pearson D."/>
            <person name="Rajandream M.A."/>
            <person name="Rice P."/>
            <person name="Skelton J."/>
            <person name="Walsh S.V."/>
            <person name="Whitehead S."/>
            <person name="Barrell B.G."/>
        </authorList>
    </citation>
    <scope>NUCLEOTIDE SEQUENCE [LARGE SCALE GENOMIC DNA]</scope>
    <source>
        <strain>ATCC 204508 / S288c</strain>
    </source>
</reference>
<reference key="3">
    <citation type="journal article" date="2014" name="G3 (Bethesda)">
        <title>The reference genome sequence of Saccharomyces cerevisiae: Then and now.</title>
        <authorList>
            <person name="Engel S.R."/>
            <person name="Dietrich F.S."/>
            <person name="Fisk D.G."/>
            <person name="Binkley G."/>
            <person name="Balakrishnan R."/>
            <person name="Costanzo M.C."/>
            <person name="Dwight S.S."/>
            <person name="Hitz B.C."/>
            <person name="Karra K."/>
            <person name="Nash R.S."/>
            <person name="Weng S."/>
            <person name="Wong E.D."/>
            <person name="Lloyd P."/>
            <person name="Skrzypek M.S."/>
            <person name="Miyasato S.R."/>
            <person name="Simison M."/>
            <person name="Cherry J.M."/>
        </authorList>
    </citation>
    <scope>GENOME REANNOTATION</scope>
    <source>
        <strain>ATCC 204508 / S288c</strain>
    </source>
</reference>
<reference key="4">
    <citation type="journal article" date="2007" name="Genome Res.">
        <title>Approaching a complete repository of sequence-verified protein-encoding clones for Saccharomyces cerevisiae.</title>
        <authorList>
            <person name="Hu Y."/>
            <person name="Rolfs A."/>
            <person name="Bhullar B."/>
            <person name="Murthy T.V.S."/>
            <person name="Zhu C."/>
            <person name="Berger M.F."/>
            <person name="Camargo A.A."/>
            <person name="Kelley F."/>
            <person name="McCarron S."/>
            <person name="Jepson D."/>
            <person name="Richardson A."/>
            <person name="Raphael J."/>
            <person name="Moreira D."/>
            <person name="Taycher E."/>
            <person name="Zuo D."/>
            <person name="Mohr S."/>
            <person name="Kane M.F."/>
            <person name="Williamson J."/>
            <person name="Simpson A.J.G."/>
            <person name="Bulyk M.L."/>
            <person name="Harlow E."/>
            <person name="Marsischky G."/>
            <person name="Kolodner R.D."/>
            <person name="LaBaer J."/>
        </authorList>
    </citation>
    <scope>NUCLEOTIDE SEQUENCE [GENOMIC DNA]</scope>
    <source>
        <strain>ATCC 204508 / S288c</strain>
    </source>
</reference>
<reference key="5">
    <citation type="journal article" date="1998" name="Mol. Cell. Biol.">
        <title>Identification of a translation initiation factor 3 (eIF3) core complex, conserved in yeast and mammals, that interacts with eIF5.</title>
        <authorList>
            <person name="Phan L."/>
            <person name="Zhang X."/>
            <person name="Asano K."/>
            <person name="Anderson J."/>
            <person name="Vornlocher H.-P."/>
            <person name="Greenberg J.R."/>
            <person name="Qin J."/>
            <person name="Hinnebusch A.G."/>
        </authorList>
    </citation>
    <scope>IDENTIFICATION IN THE EIF-3 CORE COMPLEX</scope>
    <scope>IDENTIFICATION BY MASS SPECTROMETRY</scope>
</reference>
<reference key="6">
    <citation type="journal article" date="2003" name="Nature">
        <title>Global analysis of protein expression in yeast.</title>
        <authorList>
            <person name="Ghaemmaghami S."/>
            <person name="Huh W.-K."/>
            <person name="Bower K."/>
            <person name="Howson R.W."/>
            <person name="Belle A."/>
            <person name="Dephoure N."/>
            <person name="O'Shea E.K."/>
            <person name="Weissman J.S."/>
        </authorList>
    </citation>
    <scope>LEVEL OF PROTEIN EXPRESSION [LARGE SCALE ANALYSIS]</scope>
</reference>
<reference key="7">
    <citation type="journal article" date="2006" name="Mol. Cell. Biol.">
        <title>Interaction of the RNP1 motif in PRT1 with HCR1 promotes 40S binding of eukaryotic initiation factor 3 in yeast.</title>
        <authorList>
            <person name="Nielsen K.H."/>
            <person name="Valasek L."/>
            <person name="Sykes C."/>
            <person name="Jivotovskaya A."/>
            <person name="Hinnebusch A.G."/>
        </authorList>
    </citation>
    <scope>INTERACTION WITH PRT1</scope>
    <scope>ASSOCIATION WITH THE 40S RIBOSOME</scope>
</reference>
<reference key="8">
    <citation type="journal article" date="2008" name="Mol. Cell. Proteomics">
        <title>A multidimensional chromatography technology for in-depth phosphoproteome analysis.</title>
        <authorList>
            <person name="Albuquerque C.P."/>
            <person name="Smolka M.B."/>
            <person name="Payne S.H."/>
            <person name="Bafna V."/>
            <person name="Eng J."/>
            <person name="Zhou H."/>
        </authorList>
    </citation>
    <scope>PHOSPHORYLATION [LARGE SCALE ANALYSIS] AT SER-302</scope>
    <scope>IDENTIFICATION BY MASS SPECTROMETRY [LARGE SCALE ANALYSIS]</scope>
</reference>
<reference key="9">
    <citation type="journal article" date="2008" name="Proc. Natl. Acad. Sci. U.S.A.">
        <title>Mass spectrometry reveals modularity and a complete subunit interaction map of the eukaryotic translation factor eIF3.</title>
        <authorList>
            <person name="Zhou M."/>
            <person name="Sandercock A.M."/>
            <person name="Fraser C.S."/>
            <person name="Ridlova G."/>
            <person name="Stephens E."/>
            <person name="Schenauer M.R."/>
            <person name="Yokoi-Fong T."/>
            <person name="Barsky D."/>
            <person name="Leary J.A."/>
            <person name="Hershey J.W.B."/>
            <person name="Doudna J.A."/>
            <person name="Robinson C.V."/>
        </authorList>
    </citation>
    <scope>IDENTIFICATION IN THE EIF-3 COMPLEX WITH NIP1; PRT1; TIF32 AND TIF35</scope>
</reference>
<feature type="chain" id="PRO_0000051041" description="Eukaryotic translation initiation factor 3 subunit I">
    <location>
        <begin position="1"/>
        <end position="347"/>
    </location>
</feature>
<feature type="repeat" description="WD 1">
    <location>
        <begin position="8"/>
        <end position="47"/>
    </location>
</feature>
<feature type="repeat" description="WD 2">
    <location>
        <begin position="50"/>
        <end position="89"/>
    </location>
</feature>
<feature type="repeat" description="WD 3">
    <location>
        <begin position="149"/>
        <end position="190"/>
    </location>
</feature>
<feature type="repeat" description="WD 4">
    <location>
        <begin position="194"/>
        <end position="233"/>
    </location>
</feature>
<feature type="repeat" description="WD 5">
    <location>
        <begin position="291"/>
        <end position="330"/>
    </location>
</feature>
<feature type="modified residue" description="Phosphoserine" evidence="5">
    <location>
        <position position="302"/>
    </location>
</feature>
<feature type="strand" evidence="6">
    <location>
        <begin position="1"/>
        <end position="7"/>
    </location>
</feature>
<feature type="strand" evidence="6">
    <location>
        <begin position="13"/>
        <end position="18"/>
    </location>
</feature>
<feature type="strand" evidence="6">
    <location>
        <begin position="24"/>
        <end position="32"/>
    </location>
</feature>
<feature type="strand" evidence="6">
    <location>
        <begin position="34"/>
        <end position="38"/>
    </location>
</feature>
<feature type="turn" evidence="6">
    <location>
        <begin position="39"/>
        <end position="41"/>
    </location>
</feature>
<feature type="strand" evidence="6">
    <location>
        <begin position="44"/>
        <end position="48"/>
    </location>
</feature>
<feature type="strand" evidence="6">
    <location>
        <begin position="55"/>
        <end position="60"/>
    </location>
</feature>
<feature type="strand" evidence="6">
    <location>
        <begin position="64"/>
        <end position="71"/>
    </location>
</feature>
<feature type="strand" evidence="6">
    <location>
        <begin position="74"/>
        <end position="80"/>
    </location>
</feature>
<feature type="turn" evidence="6">
    <location>
        <begin position="81"/>
        <end position="83"/>
    </location>
</feature>
<feature type="strand" evidence="6">
    <location>
        <begin position="86"/>
        <end position="91"/>
    </location>
</feature>
<feature type="strand" evidence="6">
    <location>
        <begin position="96"/>
        <end position="101"/>
    </location>
</feature>
<feature type="strand" evidence="6">
    <location>
        <begin position="105"/>
        <end position="112"/>
    </location>
</feature>
<feature type="strand" evidence="6">
    <location>
        <begin position="121"/>
        <end position="129"/>
    </location>
</feature>
<feature type="turn" evidence="6">
    <location>
        <begin position="131"/>
        <end position="133"/>
    </location>
</feature>
<feature type="strand" evidence="6">
    <location>
        <begin position="136"/>
        <end position="139"/>
    </location>
</feature>
<feature type="strand" evidence="6">
    <location>
        <begin position="144"/>
        <end position="148"/>
    </location>
</feature>
<feature type="strand" evidence="6">
    <location>
        <begin position="156"/>
        <end position="161"/>
    </location>
</feature>
<feature type="helix" evidence="6">
    <location>
        <begin position="163"/>
        <end position="165"/>
    </location>
</feature>
<feature type="strand" evidence="6">
    <location>
        <begin position="167"/>
        <end position="172"/>
    </location>
</feature>
<feature type="strand" evidence="6">
    <location>
        <begin position="175"/>
        <end position="181"/>
    </location>
</feature>
<feature type="turn" evidence="6">
    <location>
        <begin position="182"/>
        <end position="186"/>
    </location>
</feature>
<feature type="strand" evidence="6">
    <location>
        <begin position="187"/>
        <end position="193"/>
    </location>
</feature>
<feature type="strand" evidence="6">
    <location>
        <begin position="199"/>
        <end position="204"/>
    </location>
</feature>
<feature type="strand" evidence="6">
    <location>
        <begin position="208"/>
        <end position="215"/>
    </location>
</feature>
<feature type="strand" evidence="6">
    <location>
        <begin position="218"/>
        <end position="224"/>
    </location>
</feature>
<feature type="turn" evidence="6">
    <location>
        <begin position="225"/>
        <end position="227"/>
    </location>
</feature>
<feature type="strand" evidence="6">
    <location>
        <begin position="230"/>
        <end position="235"/>
    </location>
</feature>
<feature type="strand" evidence="6">
    <location>
        <begin position="240"/>
        <end position="245"/>
    </location>
</feature>
<feature type="strand" evidence="6">
    <location>
        <begin position="247"/>
        <end position="256"/>
    </location>
</feature>
<feature type="strand" evidence="6">
    <location>
        <begin position="267"/>
        <end position="269"/>
    </location>
</feature>
<feature type="strand" evidence="6">
    <location>
        <begin position="274"/>
        <end position="279"/>
    </location>
</feature>
<feature type="turn" evidence="6">
    <location>
        <begin position="280"/>
        <end position="282"/>
    </location>
</feature>
<feature type="strand" evidence="6">
    <location>
        <begin position="285"/>
        <end position="290"/>
    </location>
</feature>
<feature type="strand" evidence="6">
    <location>
        <begin position="296"/>
        <end position="301"/>
    </location>
</feature>
<feature type="strand" evidence="6">
    <location>
        <begin position="305"/>
        <end position="312"/>
    </location>
</feature>
<feature type="strand" evidence="6">
    <location>
        <begin position="315"/>
        <end position="322"/>
    </location>
</feature>
<feature type="helix" evidence="6">
    <location>
        <begin position="324"/>
        <end position="327"/>
    </location>
</feature>
<feature type="helix" evidence="6">
    <location>
        <begin position="332"/>
        <end position="339"/>
    </location>
</feature>
<protein>
    <recommendedName>
        <fullName evidence="1">Eukaryotic translation initiation factor 3 subunit I</fullName>
        <shortName evidence="1">eIF3i</shortName>
    </recommendedName>
    <alternativeName>
        <fullName>Eukaryotic translation initiation factor 3 39 kDa subunit</fullName>
        <shortName>eIF-3 39 kDa subunit</shortName>
        <shortName>eIF3 p39</shortName>
    </alternativeName>
</protein>
<evidence type="ECO:0000255" key="1">
    <source>
        <dbReference type="HAMAP-Rule" id="MF_03008"/>
    </source>
</evidence>
<evidence type="ECO:0000269" key="2">
    <source>
    </source>
</evidence>
<evidence type="ECO:0000269" key="3">
    <source>
    </source>
</evidence>
<evidence type="ECO:0000269" key="4">
    <source>
    </source>
</evidence>
<evidence type="ECO:0007744" key="5">
    <source>
    </source>
</evidence>
<evidence type="ECO:0007829" key="6">
    <source>
        <dbReference type="PDB" id="3ZWL"/>
    </source>
</evidence>
<dbReference type="EMBL" id="U56937">
    <property type="protein sequence ID" value="AAC49616.1"/>
    <property type="molecule type" value="Genomic_DNA"/>
</dbReference>
<dbReference type="EMBL" id="Z47071">
    <property type="protein sequence ID" value="CAA87361.1"/>
    <property type="molecule type" value="Genomic_DNA"/>
</dbReference>
<dbReference type="EMBL" id="AY558416">
    <property type="protein sequence ID" value="AAS56742.1"/>
    <property type="molecule type" value="Genomic_DNA"/>
</dbReference>
<dbReference type="EMBL" id="BK006946">
    <property type="protein sequence ID" value="DAA10042.1"/>
    <property type="molecule type" value="Genomic_DNA"/>
</dbReference>
<dbReference type="PIR" id="S50403">
    <property type="entry name" value="S50403"/>
</dbReference>
<dbReference type="RefSeq" id="NP_013866.1">
    <property type="nucleotide sequence ID" value="NM_001182648.1"/>
</dbReference>
<dbReference type="PDB" id="3JAP">
    <property type="method" value="EM"/>
    <property type="resolution" value="4.90 A"/>
    <property type="chains" value="q=1-347"/>
</dbReference>
<dbReference type="PDB" id="3ZWL">
    <property type="method" value="X-ray"/>
    <property type="resolution" value="2.20 A"/>
    <property type="chains" value="B/D=1-347"/>
</dbReference>
<dbReference type="PDB" id="5A5U">
    <property type="method" value="EM"/>
    <property type="resolution" value="9.00 A"/>
    <property type="chains" value="I=1-347"/>
</dbReference>
<dbReference type="PDB" id="6FYX">
    <property type="method" value="EM"/>
    <property type="resolution" value="3.05 A"/>
    <property type="chains" value="s=1-347"/>
</dbReference>
<dbReference type="PDB" id="6FYY">
    <property type="method" value="EM"/>
    <property type="resolution" value="3.05 A"/>
    <property type="chains" value="s=1-347"/>
</dbReference>
<dbReference type="PDB" id="6GSM">
    <property type="method" value="EM"/>
    <property type="resolution" value="5.15 A"/>
    <property type="chains" value="s=1-342"/>
</dbReference>
<dbReference type="PDB" id="6GSN">
    <property type="method" value="EM"/>
    <property type="resolution" value="5.75 A"/>
    <property type="chains" value="s=1-342"/>
</dbReference>
<dbReference type="PDB" id="6ZCE">
    <property type="method" value="EM"/>
    <property type="resolution" value="5.30 A"/>
    <property type="chains" value="l=1-347"/>
</dbReference>
<dbReference type="PDB" id="6ZU9">
    <property type="method" value="EM"/>
    <property type="resolution" value="6.20 A"/>
    <property type="chains" value="l=1-347"/>
</dbReference>
<dbReference type="PDB" id="8CAH">
    <property type="method" value="EM"/>
    <property type="resolution" value="3.00 A"/>
    <property type="chains" value="l=1-347"/>
</dbReference>
<dbReference type="PDB" id="8CAS">
    <property type="method" value="EM"/>
    <property type="resolution" value="3.30 A"/>
    <property type="chains" value="l=1-347"/>
</dbReference>
<dbReference type="PDBsum" id="3JAP"/>
<dbReference type="PDBsum" id="3ZWL"/>
<dbReference type="PDBsum" id="5A5U"/>
<dbReference type="PDBsum" id="6FYX"/>
<dbReference type="PDBsum" id="6FYY"/>
<dbReference type="PDBsum" id="6GSM"/>
<dbReference type="PDBsum" id="6GSN"/>
<dbReference type="PDBsum" id="6ZCE"/>
<dbReference type="PDBsum" id="6ZU9"/>
<dbReference type="PDBsum" id="8CAH"/>
<dbReference type="PDBsum" id="8CAS"/>
<dbReference type="EMDB" id="EMD-0057"/>
<dbReference type="EMDB" id="EMD-11160"/>
<dbReference type="EMDB" id="EMD-11439"/>
<dbReference type="EMDB" id="EMD-16525"/>
<dbReference type="EMDB" id="EMD-3057"/>
<dbReference type="EMDB" id="EMD-4327"/>
<dbReference type="SMR" id="P40217"/>
<dbReference type="BioGRID" id="35322">
    <property type="interactions" value="400"/>
</dbReference>
<dbReference type="ComplexPortal" id="CPX-1831">
    <property type="entry name" value="Eukaryotic translation initiation factor 3 core complex"/>
</dbReference>
<dbReference type="DIP" id="DIP-2520N"/>
<dbReference type="FunCoup" id="P40217">
    <property type="interactions" value="1361"/>
</dbReference>
<dbReference type="IntAct" id="P40217">
    <property type="interactions" value="28"/>
</dbReference>
<dbReference type="MINT" id="P40217"/>
<dbReference type="STRING" id="4932.YMR146C"/>
<dbReference type="iPTMnet" id="P40217"/>
<dbReference type="PaxDb" id="4932-YMR146C"/>
<dbReference type="PeptideAtlas" id="P40217"/>
<dbReference type="EnsemblFungi" id="YMR146C_mRNA">
    <property type="protein sequence ID" value="YMR146C"/>
    <property type="gene ID" value="YMR146C"/>
</dbReference>
<dbReference type="GeneID" id="855177"/>
<dbReference type="KEGG" id="sce:YMR146C"/>
<dbReference type="AGR" id="SGD:S000004754"/>
<dbReference type="SGD" id="S000004754">
    <property type="gene designation" value="TIF34"/>
</dbReference>
<dbReference type="VEuPathDB" id="FungiDB:YMR146C"/>
<dbReference type="eggNOG" id="KOG0643">
    <property type="taxonomic scope" value="Eukaryota"/>
</dbReference>
<dbReference type="GeneTree" id="ENSGT00940000167369"/>
<dbReference type="HOGENOM" id="CLU_043845_0_1_1"/>
<dbReference type="InParanoid" id="P40217"/>
<dbReference type="OMA" id="VWFSHNG"/>
<dbReference type="OrthoDB" id="24966at2759"/>
<dbReference type="BioCyc" id="YEAST:G3O-32838-MONOMER"/>
<dbReference type="Reactome" id="R-SCE-156827">
    <property type="pathway name" value="L13a-mediated translational silencing of Ceruloplasmin expression"/>
</dbReference>
<dbReference type="Reactome" id="R-SCE-72649">
    <property type="pathway name" value="Translation initiation complex formation"/>
</dbReference>
<dbReference type="Reactome" id="R-SCE-72695">
    <property type="pathway name" value="Formation of the ternary complex, and subsequently, the 43S complex"/>
</dbReference>
<dbReference type="Reactome" id="R-SCE-72702">
    <property type="pathway name" value="Ribosomal scanning and start codon recognition"/>
</dbReference>
<dbReference type="BioGRID-ORCS" id="855177">
    <property type="hits" value="1 hit in 10 CRISPR screens"/>
</dbReference>
<dbReference type="CD-CODE" id="E03F929F">
    <property type="entry name" value="Stress granule"/>
</dbReference>
<dbReference type="EvolutionaryTrace" id="P40217"/>
<dbReference type="PRO" id="PR:P40217"/>
<dbReference type="Proteomes" id="UP000002311">
    <property type="component" value="Chromosome XIII"/>
</dbReference>
<dbReference type="RNAct" id="P40217">
    <property type="molecule type" value="protein"/>
</dbReference>
<dbReference type="GO" id="GO:0010494">
    <property type="term" value="C:cytoplasmic stress granule"/>
    <property type="evidence" value="ECO:0007005"/>
    <property type="project" value="SGD"/>
</dbReference>
<dbReference type="GO" id="GO:0016282">
    <property type="term" value="C:eukaryotic 43S preinitiation complex"/>
    <property type="evidence" value="ECO:0007669"/>
    <property type="project" value="UniProtKB-UniRule"/>
</dbReference>
<dbReference type="GO" id="GO:0033290">
    <property type="term" value="C:eukaryotic 48S preinitiation complex"/>
    <property type="evidence" value="ECO:0007669"/>
    <property type="project" value="UniProtKB-UniRule"/>
</dbReference>
<dbReference type="GO" id="GO:0005852">
    <property type="term" value="C:eukaryotic translation initiation factor 3 complex"/>
    <property type="evidence" value="ECO:0000314"/>
    <property type="project" value="SGD"/>
</dbReference>
<dbReference type="GO" id="GO:0071541">
    <property type="term" value="C:eukaryotic translation initiation factor 3 complex, eIF3m"/>
    <property type="evidence" value="ECO:0000318"/>
    <property type="project" value="GO_Central"/>
</dbReference>
<dbReference type="GO" id="GO:0043614">
    <property type="term" value="C:multi-eIF complex"/>
    <property type="evidence" value="ECO:0000314"/>
    <property type="project" value="SGD"/>
</dbReference>
<dbReference type="GO" id="GO:0003723">
    <property type="term" value="F:RNA binding"/>
    <property type="evidence" value="ECO:0000318"/>
    <property type="project" value="GO_Central"/>
</dbReference>
<dbReference type="GO" id="GO:0003743">
    <property type="term" value="F:translation initiation factor activity"/>
    <property type="evidence" value="ECO:0000314"/>
    <property type="project" value="SGD"/>
</dbReference>
<dbReference type="GO" id="GO:0002183">
    <property type="term" value="P:cytoplasmic translational initiation"/>
    <property type="evidence" value="ECO:0000314"/>
    <property type="project" value="SGD"/>
</dbReference>
<dbReference type="GO" id="GO:0001732">
    <property type="term" value="P:formation of cytoplasmic translation initiation complex"/>
    <property type="evidence" value="ECO:0007669"/>
    <property type="project" value="UniProtKB-UniRule"/>
</dbReference>
<dbReference type="GO" id="GO:0002188">
    <property type="term" value="P:translation reinitiation"/>
    <property type="evidence" value="ECO:0000315"/>
    <property type="project" value="SGD"/>
</dbReference>
<dbReference type="GO" id="GO:0006413">
    <property type="term" value="P:translational initiation"/>
    <property type="evidence" value="ECO:0000314"/>
    <property type="project" value="ComplexPortal"/>
</dbReference>
<dbReference type="FunFam" id="2.130.10.10:FF:000127">
    <property type="entry name" value="Eukaryotic translation initiation factor 3 subunit I"/>
    <property type="match status" value="1"/>
</dbReference>
<dbReference type="Gene3D" id="2.130.10.10">
    <property type="entry name" value="YVTN repeat-like/Quinoprotein amine dehydrogenase"/>
    <property type="match status" value="1"/>
</dbReference>
<dbReference type="HAMAP" id="MF_03008">
    <property type="entry name" value="eIF3i"/>
    <property type="match status" value="1"/>
</dbReference>
<dbReference type="InterPro" id="IPR027525">
    <property type="entry name" value="eIF3i"/>
</dbReference>
<dbReference type="InterPro" id="IPR015943">
    <property type="entry name" value="WD40/YVTN_repeat-like_dom_sf"/>
</dbReference>
<dbReference type="InterPro" id="IPR019775">
    <property type="entry name" value="WD40_repeat_CS"/>
</dbReference>
<dbReference type="InterPro" id="IPR036322">
    <property type="entry name" value="WD40_repeat_dom_sf"/>
</dbReference>
<dbReference type="InterPro" id="IPR001680">
    <property type="entry name" value="WD40_rpt"/>
</dbReference>
<dbReference type="PANTHER" id="PTHR19877">
    <property type="entry name" value="EUKARYOTIC TRANSLATION INITIATION FACTOR 3 SUBUNIT I"/>
    <property type="match status" value="1"/>
</dbReference>
<dbReference type="PANTHER" id="PTHR19877:SF1">
    <property type="entry name" value="EUKARYOTIC TRANSLATION INITIATION FACTOR 3 SUBUNIT I"/>
    <property type="match status" value="1"/>
</dbReference>
<dbReference type="Pfam" id="PF24805">
    <property type="entry name" value="EIF3I"/>
    <property type="match status" value="1"/>
</dbReference>
<dbReference type="SMART" id="SM00320">
    <property type="entry name" value="WD40"/>
    <property type="match status" value="6"/>
</dbReference>
<dbReference type="SUPFAM" id="SSF50978">
    <property type="entry name" value="WD40 repeat-like"/>
    <property type="match status" value="1"/>
</dbReference>
<dbReference type="PROSITE" id="PS00678">
    <property type="entry name" value="WD_REPEATS_1"/>
    <property type="match status" value="1"/>
</dbReference>
<dbReference type="PROSITE" id="PS50082">
    <property type="entry name" value="WD_REPEATS_2"/>
    <property type="match status" value="3"/>
</dbReference>
<dbReference type="PROSITE" id="PS50294">
    <property type="entry name" value="WD_REPEATS_REGION"/>
    <property type="match status" value="2"/>
</dbReference>
<name>EIF3I_YEAST</name>
<proteinExistence type="evidence at protein level"/>
<accession>P40217</accession>
<accession>D6VZW8</accession>
<comment type="function">
    <text evidence="1">Component of the eukaryotic translation initiation factor 3 (eIF-3) complex, which is involved in protein synthesis of a specialized repertoire of mRNAs and, together with other initiation factors, stimulates binding of mRNA and methionyl-tRNAi to the 40S ribosome. The eIF-3 complex specifically targets and initiates translation of a subset of mRNAs involved in cell proliferation.</text>
</comment>
<comment type="subunit">
    <text evidence="3 4">The eukaryotic translation initiation factor 3 (eIF-3) core complex is composed of TIF32, PRT1, NIP1, TIF34 and TIF35. The factors eIF-1, eIF-2, eIF-3, TIF5/eIF-5 and methionyl-tRNAi form a multifactor complex (MFC) that may bind to the 40S ribosome.</text>
</comment>
<comment type="interaction">
    <interactant intactId="EBI-8951">
        <id>P40217</id>
    </interactant>
    <interactant intactId="EBI-8973">
        <id>P06103</id>
        <label>PRT1</label>
    </interactant>
    <organismsDiffer>false</organismsDiffer>
    <experiments>18</experiments>
</comment>
<comment type="interaction">
    <interactant intactId="EBI-8951">
        <id>P40217</id>
    </interactant>
    <interactant intactId="EBI-8981">
        <id>P38249</id>
        <label>RPG1</label>
    </interactant>
    <organismsDiffer>false</organismsDiffer>
    <experiments>9</experiments>
</comment>
<comment type="interaction">
    <interactant intactId="EBI-8951">
        <id>P40217</id>
    </interactant>
    <interactant intactId="EBI-8958">
        <id>Q04067</id>
        <label>TIF35</label>
    </interactant>
    <organismsDiffer>false</organismsDiffer>
    <experiments>8</experiments>
</comment>
<comment type="subcellular location">
    <subcellularLocation>
        <location evidence="1">Cytoplasm</location>
    </subcellularLocation>
</comment>
<comment type="miscellaneous">
    <text evidence="2">Present with 2400 molecules/cell in log phase SD medium.</text>
</comment>
<comment type="similarity">
    <text evidence="1">Belongs to the eIF-3 subunit I family.</text>
</comment>
<organism>
    <name type="scientific">Saccharomyces cerevisiae (strain ATCC 204508 / S288c)</name>
    <name type="common">Baker's yeast</name>
    <dbReference type="NCBI Taxonomy" id="559292"/>
    <lineage>
        <taxon>Eukaryota</taxon>
        <taxon>Fungi</taxon>
        <taxon>Dikarya</taxon>
        <taxon>Ascomycota</taxon>
        <taxon>Saccharomycotina</taxon>
        <taxon>Saccharomycetes</taxon>
        <taxon>Saccharomycetales</taxon>
        <taxon>Saccharomycetaceae</taxon>
        <taxon>Saccharomyces</taxon>
    </lineage>
</organism>
<gene>
    <name evidence="1" type="primary">TIF34</name>
    <name type="ordered locus">YMR146C</name>
    <name type="ORF">YM9375.16C</name>
</gene>